<keyword id="KW-0050">Antiport</keyword>
<keyword id="KW-0106">Calcium</keyword>
<keyword id="KW-0109">Calcium transport</keyword>
<keyword id="KW-0112">Calmodulin-binding</keyword>
<keyword id="KW-1003">Cell membrane</keyword>
<keyword id="KW-0966">Cell projection</keyword>
<keyword id="KW-0325">Glycoprotein</keyword>
<keyword id="KW-0406">Ion transport</keyword>
<keyword id="KW-0472">Membrane</keyword>
<keyword id="KW-0479">Metal-binding</keyword>
<keyword id="KW-0597">Phosphoprotein</keyword>
<keyword id="KW-1267">Proteomics identification</keyword>
<keyword id="KW-1185">Reference proteome</keyword>
<keyword id="KW-0677">Repeat</keyword>
<keyword id="KW-0732">Signal</keyword>
<keyword id="KW-0915">Sodium</keyword>
<keyword id="KW-0739">Sodium transport</keyword>
<keyword id="KW-0770">Synapse</keyword>
<keyword id="KW-0812">Transmembrane</keyword>
<keyword id="KW-1133">Transmembrane helix</keyword>
<keyword id="KW-0813">Transport</keyword>
<gene>
    <name type="primary">SLC8A2</name>
    <name type="synonym">KIAA1087</name>
    <name type="synonym">NCX2</name>
</gene>
<sequence>MAPLALVGVTLLLAAPPCSGAATPTPSLPPPPANDSDTSTGGCQGSYRCQPGVLLPVWEPDDPSLGDKAARAVVYFVAMVYMFLGVSIIADRFMAAIEVITSKEKEITITKANGETSVGTVRIWNETVSNLTLMALGSSAPEILLSVIEVCGHNFQAGELGPGTIVGSAAFNMFVVIAVCIYVIPAGESRKIKHLRVFFVTASWSIFAYVWLYLILAVFSPGVVQVWEALLTLVFFPVCVVFAWMADKRLLFYKYVYKRYRTDPRSGIIIGAEGDPPKSIELDGTFVGAEAPGELGGLGPGPAEARELDASRREVIQILKDLKQKHPDKDLEQLVGIANYYALLHQQKSRAFYRIQATRLMTGAGNVLRRHAADASRRAAPAEGAGEDEDDGASRIFFEPSLYHCLENCGSVLLSVTCQGGEGNSTFYVDYRTEDGSAKAGSDYEYSEGTLVFKPGETQKELRIGIIDDDIFEEDEHFFVRLLNLRVGDAQGMFEPDGGGRPKGRLVAPLLATVTILDDDHAGIFSFQDRLLHVSECMGTVDVRVVRSSGARGTVRLPYRTVDGTARGGGVHYEDACGELEFGDDETMKTLQVKIVDDEEYEKKDNFFIELGQPQWLKRGISALLLNQGDGDRKLTAEEEEARRIAEMGKPVLGENCRLEVIIEESYDFKNTVDKLIKKTNLALVIGTHSWREQFLEAITVSAGDEEEEEDGSREERLPSCFDYVMHFLTVFWKVLFACVPPTEYCHGWACFGVSILVIGLLTALIGDLASHFGCTVGLKDSVNAVVFVALGTSIPDTFASKVAALQDQCADASIGNVTGSNAVNVFLGLGVAWSVAAVYWAVQGRPFEVRTGTLAFSVTLFTVFAFVGIAVLLYRRRPHIGGELGGPRGPKLATTALFLGLWLLYILFASLEAYCHIRGF</sequence>
<organism>
    <name type="scientific">Homo sapiens</name>
    <name type="common">Human</name>
    <dbReference type="NCBI Taxonomy" id="9606"/>
    <lineage>
        <taxon>Eukaryota</taxon>
        <taxon>Metazoa</taxon>
        <taxon>Chordata</taxon>
        <taxon>Craniata</taxon>
        <taxon>Vertebrata</taxon>
        <taxon>Euteleostomi</taxon>
        <taxon>Mammalia</taxon>
        <taxon>Eutheria</taxon>
        <taxon>Euarchontoglires</taxon>
        <taxon>Primates</taxon>
        <taxon>Haplorrhini</taxon>
        <taxon>Catarrhini</taxon>
        <taxon>Hominidae</taxon>
        <taxon>Homo</taxon>
    </lineage>
</organism>
<accession>Q9UPR5</accession>
<accession>B4DYQ9</accession>
<comment type="function">
    <text evidence="3">Mediates the electrogenic exchange of Ca(2+) against Na(+) ions across the cell membrane, and thereby contributes to the regulation of cytoplasmic Ca(2+) levels and Ca(2+)-dependent cellular processes. Contributes to cellular Ca(2+) homeostasis in excitable cells. Contributes to the rapid decrease of cytoplasmic Ca(2+) levels back to baseline after neuronal activation, and thereby contributes to modulate synaptic plasticity, learning and memory. Plays a role in regulating urinary Ca(2+) and Na(+) excretion.</text>
</comment>
<comment type="catalytic activity">
    <reaction evidence="2">
        <text>Ca(2+)(in) + 3 Na(+)(out) = Ca(2+)(out) + 3 Na(+)(in)</text>
        <dbReference type="Rhea" id="RHEA:69955"/>
        <dbReference type="ChEBI" id="CHEBI:29101"/>
        <dbReference type="ChEBI" id="CHEBI:29108"/>
    </reaction>
</comment>
<comment type="activity regulation">
    <text evidence="2">Calcium transport is down-regulated by Na(+) and stimulated by Ca(2+).</text>
</comment>
<comment type="subcellular location">
    <subcellularLocation>
        <location evidence="2">Cell membrane</location>
        <topology evidence="2">Multi-pass membrane protein</topology>
    </subcellularLocation>
    <subcellularLocation>
        <location evidence="3">Basolateral cell membrane</location>
        <topology evidence="3">Multi-pass membrane protein</topology>
    </subcellularLocation>
    <subcellularLocation>
        <location evidence="2">Perikaryon</location>
    </subcellularLocation>
    <subcellularLocation>
        <location evidence="2">Cell projection</location>
        <location evidence="2">Dendrite</location>
    </subcellularLocation>
    <subcellularLocation>
        <location evidence="2">Cell projection</location>
        <location evidence="2">Dendritic spine</location>
    </subcellularLocation>
</comment>
<comment type="domain">
    <text evidence="1">The cytoplasmic Calx-beta domains bind the regulatory Ca(2+). The first Calx-beta domain can bind up to four Ca(2+) ions. The second domain can bind another two Ca(2+) ions that are essential for calcium-regulated ion exchange.</text>
</comment>
<comment type="similarity">
    <text evidence="7">Belongs to the Ca(2+):cation antiporter (CaCA) (TC 2.A.19) family. SLC8 subfamily.</text>
</comment>
<comment type="sequence caution" evidence="7">
    <conflict type="erroneous initiation">
        <sequence resource="EMBL-CDS" id="BAA83039"/>
    </conflict>
</comment>
<evidence type="ECO:0000250" key="1">
    <source>
        <dbReference type="UniProtKB" id="P23685"/>
    </source>
</evidence>
<evidence type="ECO:0000250" key="2">
    <source>
        <dbReference type="UniProtKB" id="P48768"/>
    </source>
</evidence>
<evidence type="ECO:0000250" key="3">
    <source>
        <dbReference type="UniProtKB" id="Q8K596"/>
    </source>
</evidence>
<evidence type="ECO:0000255" key="4"/>
<evidence type="ECO:0000256" key="5">
    <source>
        <dbReference type="SAM" id="MobiDB-lite"/>
    </source>
</evidence>
<evidence type="ECO:0000269" key="6">
    <source>
    </source>
</evidence>
<evidence type="ECO:0000305" key="7"/>
<name>NAC2_HUMAN</name>
<reference key="1">
    <citation type="journal article" date="1999" name="DNA Res.">
        <title>Prediction of the coding sequences of unidentified human genes. XIV. The complete sequences of 100 new cDNA clones from brain which code for large proteins in vitro.</title>
        <authorList>
            <person name="Kikuno R."/>
            <person name="Nagase T."/>
            <person name="Ishikawa K."/>
            <person name="Hirosawa M."/>
            <person name="Miyajima N."/>
            <person name="Tanaka A."/>
            <person name="Kotani H."/>
            <person name="Nomura N."/>
            <person name="Ohara O."/>
        </authorList>
    </citation>
    <scope>NUCLEOTIDE SEQUENCE [LARGE SCALE MRNA]</scope>
    <source>
        <tissue>Brain</tissue>
    </source>
</reference>
<reference key="2">
    <citation type="journal article" date="2004" name="Nat. Genet.">
        <title>Complete sequencing and characterization of 21,243 full-length human cDNAs.</title>
        <authorList>
            <person name="Ota T."/>
            <person name="Suzuki Y."/>
            <person name="Nishikawa T."/>
            <person name="Otsuki T."/>
            <person name="Sugiyama T."/>
            <person name="Irie R."/>
            <person name="Wakamatsu A."/>
            <person name="Hayashi K."/>
            <person name="Sato H."/>
            <person name="Nagai K."/>
            <person name="Kimura K."/>
            <person name="Makita H."/>
            <person name="Sekine M."/>
            <person name="Obayashi M."/>
            <person name="Nishi T."/>
            <person name="Shibahara T."/>
            <person name="Tanaka T."/>
            <person name="Ishii S."/>
            <person name="Yamamoto J."/>
            <person name="Saito K."/>
            <person name="Kawai Y."/>
            <person name="Isono Y."/>
            <person name="Nakamura Y."/>
            <person name="Nagahari K."/>
            <person name="Murakami K."/>
            <person name="Yasuda T."/>
            <person name="Iwayanagi T."/>
            <person name="Wagatsuma M."/>
            <person name="Shiratori A."/>
            <person name="Sudo H."/>
            <person name="Hosoiri T."/>
            <person name="Kaku Y."/>
            <person name="Kodaira H."/>
            <person name="Kondo H."/>
            <person name="Sugawara M."/>
            <person name="Takahashi M."/>
            <person name="Kanda K."/>
            <person name="Yokoi T."/>
            <person name="Furuya T."/>
            <person name="Kikkawa E."/>
            <person name="Omura Y."/>
            <person name="Abe K."/>
            <person name="Kamihara K."/>
            <person name="Katsuta N."/>
            <person name="Sato K."/>
            <person name="Tanikawa M."/>
            <person name="Yamazaki M."/>
            <person name="Ninomiya K."/>
            <person name="Ishibashi T."/>
            <person name="Yamashita H."/>
            <person name="Murakawa K."/>
            <person name="Fujimori K."/>
            <person name="Tanai H."/>
            <person name="Kimata M."/>
            <person name="Watanabe M."/>
            <person name="Hiraoka S."/>
            <person name="Chiba Y."/>
            <person name="Ishida S."/>
            <person name="Ono Y."/>
            <person name="Takiguchi S."/>
            <person name="Watanabe S."/>
            <person name="Yosida M."/>
            <person name="Hotuta T."/>
            <person name="Kusano J."/>
            <person name="Kanehori K."/>
            <person name="Takahashi-Fujii A."/>
            <person name="Hara H."/>
            <person name="Tanase T.-O."/>
            <person name="Nomura Y."/>
            <person name="Togiya S."/>
            <person name="Komai F."/>
            <person name="Hara R."/>
            <person name="Takeuchi K."/>
            <person name="Arita M."/>
            <person name="Imose N."/>
            <person name="Musashino K."/>
            <person name="Yuuki H."/>
            <person name="Oshima A."/>
            <person name="Sasaki N."/>
            <person name="Aotsuka S."/>
            <person name="Yoshikawa Y."/>
            <person name="Matsunawa H."/>
            <person name="Ichihara T."/>
            <person name="Shiohata N."/>
            <person name="Sano S."/>
            <person name="Moriya S."/>
            <person name="Momiyama H."/>
            <person name="Satoh N."/>
            <person name="Takami S."/>
            <person name="Terashima Y."/>
            <person name="Suzuki O."/>
            <person name="Nakagawa S."/>
            <person name="Senoh A."/>
            <person name="Mizoguchi H."/>
            <person name="Goto Y."/>
            <person name="Shimizu F."/>
            <person name="Wakebe H."/>
            <person name="Hishigaki H."/>
            <person name="Watanabe T."/>
            <person name="Sugiyama A."/>
            <person name="Takemoto M."/>
            <person name="Kawakami B."/>
            <person name="Yamazaki M."/>
            <person name="Watanabe K."/>
            <person name="Kumagai A."/>
            <person name="Itakura S."/>
            <person name="Fukuzumi Y."/>
            <person name="Fujimori Y."/>
            <person name="Komiyama M."/>
            <person name="Tashiro H."/>
            <person name="Tanigami A."/>
            <person name="Fujiwara T."/>
            <person name="Ono T."/>
            <person name="Yamada K."/>
            <person name="Fujii Y."/>
            <person name="Ozaki K."/>
            <person name="Hirao M."/>
            <person name="Ohmori Y."/>
            <person name="Kawabata A."/>
            <person name="Hikiji T."/>
            <person name="Kobatake N."/>
            <person name="Inagaki H."/>
            <person name="Ikema Y."/>
            <person name="Okamoto S."/>
            <person name="Okitani R."/>
            <person name="Kawakami T."/>
            <person name="Noguchi S."/>
            <person name="Itoh T."/>
            <person name="Shigeta K."/>
            <person name="Senba T."/>
            <person name="Matsumura K."/>
            <person name="Nakajima Y."/>
            <person name="Mizuno T."/>
            <person name="Morinaga M."/>
            <person name="Sasaki M."/>
            <person name="Togashi T."/>
            <person name="Oyama M."/>
            <person name="Hata H."/>
            <person name="Watanabe M."/>
            <person name="Komatsu T."/>
            <person name="Mizushima-Sugano J."/>
            <person name="Satoh T."/>
            <person name="Shirai Y."/>
            <person name="Takahashi Y."/>
            <person name="Nakagawa K."/>
            <person name="Okumura K."/>
            <person name="Nagase T."/>
            <person name="Nomura N."/>
            <person name="Kikuchi H."/>
            <person name="Masuho Y."/>
            <person name="Yamashita R."/>
            <person name="Nakai K."/>
            <person name="Yada T."/>
            <person name="Nakamura Y."/>
            <person name="Ohara O."/>
            <person name="Isogai T."/>
            <person name="Sugano S."/>
        </authorList>
    </citation>
    <scope>NUCLEOTIDE SEQUENCE [LARGE SCALE MRNA]</scope>
    <source>
        <tissue>Testis</tissue>
    </source>
</reference>
<reference key="3">
    <citation type="submission" date="2005-07" db="EMBL/GenBank/DDBJ databases">
        <authorList>
            <person name="Mural R.J."/>
            <person name="Istrail S."/>
            <person name="Sutton G.G."/>
            <person name="Florea L."/>
            <person name="Halpern A.L."/>
            <person name="Mobarry C.M."/>
            <person name="Lippert R."/>
            <person name="Walenz B."/>
            <person name="Shatkay H."/>
            <person name="Dew I."/>
            <person name="Miller J.R."/>
            <person name="Flanigan M.J."/>
            <person name="Edwards N.J."/>
            <person name="Bolanos R."/>
            <person name="Fasulo D."/>
            <person name="Halldorsson B.V."/>
            <person name="Hannenhalli S."/>
            <person name="Turner R."/>
            <person name="Yooseph S."/>
            <person name="Lu F."/>
            <person name="Nusskern D.R."/>
            <person name="Shue B.C."/>
            <person name="Zheng X.H."/>
            <person name="Zhong F."/>
            <person name="Delcher A.L."/>
            <person name="Huson D.H."/>
            <person name="Kravitz S.A."/>
            <person name="Mouchard L."/>
            <person name="Reinert K."/>
            <person name="Remington K.A."/>
            <person name="Clark A.G."/>
            <person name="Waterman M.S."/>
            <person name="Eichler E.E."/>
            <person name="Adams M.D."/>
            <person name="Hunkapiller M.W."/>
            <person name="Myers E.W."/>
            <person name="Venter J.C."/>
        </authorList>
    </citation>
    <scope>NUCLEOTIDE SEQUENCE [LARGE SCALE GENOMIC DNA]</scope>
</reference>
<reference key="4">
    <citation type="journal article" date="2013" name="Mol. Aspects Med.">
        <title>The SLC8 gene family of sodium-calcium exchangers (NCX) - structure, function, and regulation in health and disease.</title>
        <authorList>
            <person name="Khananshvili D."/>
        </authorList>
    </citation>
    <scope>REVIEW</scope>
</reference>
<reference key="5">
    <citation type="journal article" date="2014" name="Hum. Mol. Genet.">
        <title>Exome sequencing identifies de novo gain of function missense mutation in KCND2 in identical twins with autism and seizures that slows potassium channel inactivation.</title>
        <authorList>
            <person name="Lee H."/>
            <person name="Lin M.C."/>
            <person name="Kornblum H.I."/>
            <person name="Papazian D.M."/>
            <person name="Nelson S.F."/>
        </authorList>
    </citation>
    <scope>VARIANT LEU-29</scope>
</reference>
<feature type="signal peptide" evidence="4">
    <location>
        <begin position="1"/>
        <end position="20"/>
    </location>
</feature>
<feature type="chain" id="PRO_0000019382" description="Sodium/calcium exchanger 2">
    <location>
        <begin position="21"/>
        <end position="921"/>
    </location>
</feature>
<feature type="topological domain" description="Extracellular" evidence="4">
    <location>
        <begin position="21"/>
        <end position="68"/>
    </location>
</feature>
<feature type="transmembrane region" description="Helical" evidence="4">
    <location>
        <begin position="69"/>
        <end position="90"/>
    </location>
</feature>
<feature type="topological domain" description="Cytoplasmic" evidence="4">
    <location>
        <begin position="91"/>
        <end position="130"/>
    </location>
</feature>
<feature type="transmembrane region" description="Helical" evidence="4">
    <location>
        <begin position="131"/>
        <end position="152"/>
    </location>
</feature>
<feature type="topological domain" description="Extracellular" evidence="4">
    <location>
        <begin position="153"/>
        <end position="164"/>
    </location>
</feature>
<feature type="transmembrane region" description="Helical" evidence="4">
    <location>
        <begin position="165"/>
        <end position="185"/>
    </location>
</feature>
<feature type="topological domain" description="Cytoplasmic" evidence="4">
    <location>
        <begin position="186"/>
        <end position="196"/>
    </location>
</feature>
<feature type="transmembrane region" description="Helical" evidence="4">
    <location>
        <begin position="197"/>
        <end position="219"/>
    </location>
</feature>
<feature type="topological domain" description="Extracellular" evidence="4">
    <location>
        <begin position="220"/>
        <end position="222"/>
    </location>
</feature>
<feature type="transmembrane region" description="Helical" evidence="4">
    <location>
        <begin position="223"/>
        <end position="246"/>
    </location>
</feature>
<feature type="topological domain" description="Cytoplasmic" evidence="4">
    <location>
        <begin position="247"/>
        <end position="720"/>
    </location>
</feature>
<feature type="transmembrane region" description="Helical" evidence="4">
    <location>
        <begin position="721"/>
        <end position="740"/>
    </location>
</feature>
<feature type="topological domain" description="Extracellular" evidence="4">
    <location>
        <begin position="741"/>
        <end position="747"/>
    </location>
</feature>
<feature type="transmembrane region" description="Helical" evidence="4">
    <location>
        <begin position="748"/>
        <end position="770"/>
    </location>
</feature>
<feature type="topological domain" description="Cytoplasmic" evidence="4">
    <location>
        <begin position="771"/>
        <end position="772"/>
    </location>
</feature>
<feature type="transmembrane region" description="Helical" evidence="4">
    <location>
        <begin position="773"/>
        <end position="791"/>
    </location>
</feature>
<feature type="topological domain" description="Extracellular" evidence="4">
    <location>
        <begin position="792"/>
        <end position="822"/>
    </location>
</feature>
<feature type="transmembrane region" description="Helical" evidence="4">
    <location>
        <begin position="823"/>
        <end position="843"/>
    </location>
</feature>
<feature type="topological domain" description="Cytoplasmic" evidence="4">
    <location>
        <begin position="844"/>
        <end position="854"/>
    </location>
</feature>
<feature type="transmembrane region" description="Helical" evidence="4">
    <location>
        <begin position="855"/>
        <end position="875"/>
    </location>
</feature>
<feature type="topological domain" description="Extracellular" evidence="4">
    <location>
        <begin position="876"/>
        <end position="892"/>
    </location>
</feature>
<feature type="transmembrane region" description="Helical" evidence="4">
    <location>
        <begin position="893"/>
        <end position="909"/>
    </location>
</feature>
<feature type="topological domain" description="Cytoplasmic" evidence="4">
    <location>
        <begin position="910"/>
        <end position="921"/>
    </location>
</feature>
<feature type="repeat" description="Alpha-1">
    <location>
        <begin position="135"/>
        <end position="175"/>
    </location>
</feature>
<feature type="domain" description="Calx-beta 1">
    <location>
        <begin position="384"/>
        <end position="483"/>
    </location>
</feature>
<feature type="domain" description="Calx-beta 2">
    <location>
        <begin position="512"/>
        <end position="612"/>
    </location>
</feature>
<feature type="repeat" description="Alpha-2">
    <location>
        <begin position="790"/>
        <end position="826"/>
    </location>
</feature>
<feature type="region of interest" description="Disordered" evidence="5">
    <location>
        <begin position="22"/>
        <end position="42"/>
    </location>
</feature>
<feature type="region of interest" description="Putative calmodulin-binding region" evidence="1">
    <location>
        <begin position="248"/>
        <end position="267"/>
    </location>
</feature>
<feature type="binding site" evidence="1">
    <location>
        <position position="407"/>
    </location>
    <ligand>
        <name>Ca(2+)</name>
        <dbReference type="ChEBI" id="CHEBI:29108"/>
        <label>1</label>
    </ligand>
</feature>
<feature type="binding site" evidence="1">
    <location>
        <position position="407"/>
    </location>
    <ligand>
        <name>Ca(2+)</name>
        <dbReference type="ChEBI" id="CHEBI:29108"/>
        <label>2</label>
    </ligand>
</feature>
<feature type="binding site" evidence="1">
    <location>
        <position position="407"/>
    </location>
    <ligand>
        <name>Ca(2+)</name>
        <dbReference type="ChEBI" id="CHEBI:29108"/>
        <label>3</label>
    </ligand>
</feature>
<feature type="binding site" evidence="1">
    <location>
        <position position="443"/>
    </location>
    <ligand>
        <name>Ca(2+)</name>
        <dbReference type="ChEBI" id="CHEBI:29108"/>
        <label>1</label>
    </ligand>
</feature>
<feature type="binding site" evidence="1">
    <location>
        <position position="443"/>
    </location>
    <ligand>
        <name>Ca(2+)</name>
        <dbReference type="ChEBI" id="CHEBI:29108"/>
        <label>4</label>
    </ligand>
</feature>
<feature type="binding site" evidence="1">
    <location>
        <position position="468"/>
    </location>
    <ligand>
        <name>Ca(2+)</name>
        <dbReference type="ChEBI" id="CHEBI:29108"/>
        <label>2</label>
    </ligand>
</feature>
<feature type="binding site" evidence="1">
    <location>
        <position position="469"/>
    </location>
    <ligand>
        <name>Ca(2+)</name>
        <dbReference type="ChEBI" id="CHEBI:29108"/>
        <label>1</label>
    </ligand>
</feature>
<feature type="binding site" evidence="1">
    <location>
        <position position="469"/>
    </location>
    <ligand>
        <name>Ca(2+)</name>
        <dbReference type="ChEBI" id="CHEBI:29108"/>
        <label>2</label>
    </ligand>
</feature>
<feature type="binding site" evidence="1">
    <location>
        <position position="469"/>
    </location>
    <ligand>
        <name>Ca(2+)</name>
        <dbReference type="ChEBI" id="CHEBI:29108"/>
        <label>3</label>
    </ligand>
</feature>
<feature type="binding site" evidence="1">
    <location>
        <position position="469"/>
    </location>
    <ligand>
        <name>Ca(2+)</name>
        <dbReference type="ChEBI" id="CHEBI:29108"/>
        <label>4</label>
    </ligand>
</feature>
<feature type="binding site" evidence="1">
    <location>
        <position position="471"/>
    </location>
    <ligand>
        <name>Ca(2+)</name>
        <dbReference type="ChEBI" id="CHEBI:29108"/>
        <label>3</label>
    </ligand>
</feature>
<feature type="binding site" evidence="1">
    <location>
        <position position="473"/>
    </location>
    <ligand>
        <name>Ca(2+)</name>
        <dbReference type="ChEBI" id="CHEBI:29108"/>
        <label>1</label>
    </ligand>
</feature>
<feature type="binding site" evidence="1">
    <location>
        <position position="473"/>
    </location>
    <ligand>
        <name>Ca(2+)</name>
        <dbReference type="ChEBI" id="CHEBI:29108"/>
        <label>3</label>
    </ligand>
</feature>
<feature type="binding site" evidence="1">
    <location>
        <position position="473"/>
    </location>
    <ligand>
        <name>Ca(2+)</name>
        <dbReference type="ChEBI" id="CHEBI:29108"/>
        <label>4</label>
    </ligand>
</feature>
<feature type="binding site" evidence="1">
    <location>
        <position position="476"/>
    </location>
    <ligand>
        <name>Ca(2+)</name>
        <dbReference type="ChEBI" id="CHEBI:29108"/>
        <label>4</label>
    </ligand>
</feature>
<feature type="binding site" evidence="1">
    <location>
        <position position="518"/>
    </location>
    <ligand>
        <name>Ca(2+)</name>
        <dbReference type="ChEBI" id="CHEBI:29108"/>
        <label>3</label>
    </ligand>
</feature>
<feature type="binding site" evidence="1">
    <location>
        <position position="519"/>
    </location>
    <ligand>
        <name>Ca(2+)</name>
        <dbReference type="ChEBI" id="CHEBI:29108"/>
        <label>2</label>
    </ligand>
</feature>
<feature type="binding site" evidence="1">
    <location>
        <position position="520"/>
    </location>
    <ligand>
        <name>Ca(2+)</name>
        <dbReference type="ChEBI" id="CHEBI:29108"/>
        <label>2</label>
    </ligand>
</feature>
<feature type="binding site" evidence="1">
    <location>
        <position position="520"/>
    </location>
    <ligand>
        <name>Ca(2+)</name>
        <dbReference type="ChEBI" id="CHEBI:29108"/>
        <label>3</label>
    </ligand>
</feature>
<feature type="binding site" evidence="1">
    <location>
        <position position="536"/>
    </location>
    <ligand>
        <name>Ca(2+)</name>
        <dbReference type="ChEBI" id="CHEBI:29108"/>
        <label>5</label>
    </ligand>
</feature>
<feature type="binding site" evidence="1">
    <location>
        <position position="598"/>
    </location>
    <ligand>
        <name>Ca(2+)</name>
        <dbReference type="ChEBI" id="CHEBI:29108"/>
        <label>5</label>
    </ligand>
</feature>
<feature type="binding site" evidence="1">
    <location>
        <position position="598"/>
    </location>
    <ligand>
        <name>Ca(2+)</name>
        <dbReference type="ChEBI" id="CHEBI:29108"/>
        <label>6</label>
    </ligand>
</feature>
<feature type="binding site" evidence="1">
    <location>
        <position position="599"/>
    </location>
    <ligand>
        <name>Ca(2+)</name>
        <dbReference type="ChEBI" id="CHEBI:29108"/>
        <label>6</label>
    </ligand>
</feature>
<feature type="binding site" evidence="1">
    <location>
        <position position="600"/>
    </location>
    <ligand>
        <name>Ca(2+)</name>
        <dbReference type="ChEBI" id="CHEBI:29108"/>
        <label>5</label>
    </ligand>
</feature>
<feature type="binding site" evidence="1">
    <location>
        <position position="600"/>
    </location>
    <ligand>
        <name>Ca(2+)</name>
        <dbReference type="ChEBI" id="CHEBI:29108"/>
        <label>6</label>
    </ligand>
</feature>
<feature type="binding site" evidence="1">
    <location>
        <position position="665"/>
    </location>
    <ligand>
        <name>Ca(2+)</name>
        <dbReference type="ChEBI" id="CHEBI:29108"/>
        <label>5</label>
    </ligand>
</feature>
<feature type="modified residue" description="Phosphoserine" evidence="3">
    <location>
        <position position="622"/>
    </location>
</feature>
<feature type="glycosylation site" description="N-linked (GlcNAc...) asparagine" evidence="4">
    <location>
        <position position="34"/>
    </location>
</feature>
<feature type="glycosylation site" description="N-linked (GlcNAc...) asparagine" evidence="4">
    <location>
        <position position="817"/>
    </location>
</feature>
<feature type="sequence variant" id="VAR_072078" description="Found in a family with atypical autism and severe epilepsy; uncertain significance; dbSNP:rs201723439." evidence="6">
    <original>P</original>
    <variation>L</variation>
    <location>
        <position position="29"/>
    </location>
</feature>
<feature type="sequence variant" id="VAR_050226" description="In dbSNP:rs17759929.">
    <original>V</original>
    <variation>L</variation>
    <location>
        <position position="429"/>
    </location>
</feature>
<dbReference type="EMBL" id="AB029010">
    <property type="protein sequence ID" value="BAA83039.1"/>
    <property type="status" value="ALT_INIT"/>
    <property type="molecule type" value="mRNA"/>
</dbReference>
<dbReference type="EMBL" id="AK302552">
    <property type="protein sequence ID" value="BAG63821.1"/>
    <property type="molecule type" value="mRNA"/>
</dbReference>
<dbReference type="EMBL" id="CH471126">
    <property type="protein sequence ID" value="EAW57485.1"/>
    <property type="molecule type" value="Genomic_DNA"/>
</dbReference>
<dbReference type="CCDS" id="CCDS33065.1"/>
<dbReference type="RefSeq" id="NP_055878.1">
    <property type="nucleotide sequence ID" value="NM_015063.3"/>
</dbReference>
<dbReference type="SMR" id="Q9UPR5"/>
<dbReference type="BioGRID" id="112434">
    <property type="interactions" value="5"/>
</dbReference>
<dbReference type="FunCoup" id="Q9UPR5">
    <property type="interactions" value="1377"/>
</dbReference>
<dbReference type="IntAct" id="Q9UPR5">
    <property type="interactions" value="5"/>
</dbReference>
<dbReference type="MINT" id="Q9UPR5"/>
<dbReference type="STRING" id="9606.ENSP00000236877"/>
<dbReference type="TCDB" id="2.A.19.3.5">
    <property type="family name" value="the ca(2+):cation antiporter (caca) family"/>
</dbReference>
<dbReference type="GlyCosmos" id="Q9UPR5">
    <property type="glycosylation" value="2 sites, No reported glycans"/>
</dbReference>
<dbReference type="GlyGen" id="Q9UPR5">
    <property type="glycosylation" value="3 sites"/>
</dbReference>
<dbReference type="iPTMnet" id="Q9UPR5"/>
<dbReference type="PhosphoSitePlus" id="Q9UPR5"/>
<dbReference type="SwissPalm" id="Q9UPR5"/>
<dbReference type="BioMuta" id="SLC8A2"/>
<dbReference type="MassIVE" id="Q9UPR5"/>
<dbReference type="PaxDb" id="9606-ENSP00000236877"/>
<dbReference type="PeptideAtlas" id="Q9UPR5"/>
<dbReference type="ProteomicsDB" id="85427"/>
<dbReference type="Antibodypedia" id="54559">
    <property type="antibodies" value="84 antibodies from 17 providers"/>
</dbReference>
<dbReference type="DNASU" id="6543"/>
<dbReference type="Ensembl" id="ENST00000236877.11">
    <property type="protein sequence ID" value="ENSP00000236877.5"/>
    <property type="gene ID" value="ENSG00000118160.14"/>
</dbReference>
<dbReference type="GeneID" id="6543"/>
<dbReference type="KEGG" id="hsa:6543"/>
<dbReference type="MANE-Select" id="ENST00000236877.11">
    <property type="protein sequence ID" value="ENSP00000236877.5"/>
    <property type="RefSeq nucleotide sequence ID" value="NM_015063.3"/>
    <property type="RefSeq protein sequence ID" value="NP_055878.1"/>
</dbReference>
<dbReference type="UCSC" id="uc002pgx.4">
    <property type="organism name" value="human"/>
</dbReference>
<dbReference type="AGR" id="HGNC:11069"/>
<dbReference type="CTD" id="6543"/>
<dbReference type="DisGeNET" id="6543"/>
<dbReference type="GeneCards" id="SLC8A2"/>
<dbReference type="HGNC" id="HGNC:11069">
    <property type="gene designation" value="SLC8A2"/>
</dbReference>
<dbReference type="HPA" id="ENSG00000118160">
    <property type="expression patterns" value="Tissue enriched (brain)"/>
</dbReference>
<dbReference type="MIM" id="601901">
    <property type="type" value="gene"/>
</dbReference>
<dbReference type="neXtProt" id="NX_Q9UPR5"/>
<dbReference type="OpenTargets" id="ENSG00000118160"/>
<dbReference type="PharmGKB" id="PA313"/>
<dbReference type="VEuPathDB" id="HostDB:ENSG00000118160"/>
<dbReference type="eggNOG" id="KOG1306">
    <property type="taxonomic scope" value="Eukaryota"/>
</dbReference>
<dbReference type="GeneTree" id="ENSGT00940000158344"/>
<dbReference type="HOGENOM" id="CLU_012872_1_0_1"/>
<dbReference type="InParanoid" id="Q9UPR5"/>
<dbReference type="OMA" id="PEDKHQK"/>
<dbReference type="OrthoDB" id="418484at2759"/>
<dbReference type="PAN-GO" id="Q9UPR5">
    <property type="GO annotations" value="7 GO annotations based on evolutionary models"/>
</dbReference>
<dbReference type="PhylomeDB" id="Q9UPR5"/>
<dbReference type="TreeFam" id="TF314308"/>
<dbReference type="PathwayCommons" id="Q9UPR5"/>
<dbReference type="Reactome" id="R-HSA-418359">
    <property type="pathway name" value="Reduction of cytosolic Ca++ levels"/>
</dbReference>
<dbReference type="Reactome" id="R-HSA-425561">
    <property type="pathway name" value="Sodium/Calcium exchangers"/>
</dbReference>
<dbReference type="Reactome" id="R-HSA-5578775">
    <property type="pathway name" value="Ion homeostasis"/>
</dbReference>
<dbReference type="SignaLink" id="Q9UPR5"/>
<dbReference type="BioGRID-ORCS" id="6543">
    <property type="hits" value="12 hits in 1147 CRISPR screens"/>
</dbReference>
<dbReference type="CD-CODE" id="FB4E32DD">
    <property type="entry name" value="Presynaptic clusters and postsynaptic densities"/>
</dbReference>
<dbReference type="ChiTaRS" id="SLC8A2">
    <property type="organism name" value="human"/>
</dbReference>
<dbReference type="GenomeRNAi" id="6543"/>
<dbReference type="Pharos" id="Q9UPR5">
    <property type="development level" value="Tbio"/>
</dbReference>
<dbReference type="PRO" id="PR:Q9UPR5"/>
<dbReference type="Proteomes" id="UP000005640">
    <property type="component" value="Chromosome 19"/>
</dbReference>
<dbReference type="RNAct" id="Q9UPR5">
    <property type="molecule type" value="protein"/>
</dbReference>
<dbReference type="Bgee" id="ENSG00000118160">
    <property type="expression patterns" value="Expressed in right hemisphere of cerebellum and 121 other cell types or tissues"/>
</dbReference>
<dbReference type="ExpressionAtlas" id="Q9UPR5">
    <property type="expression patterns" value="baseline and differential"/>
</dbReference>
<dbReference type="GO" id="GO:0030424">
    <property type="term" value="C:axon"/>
    <property type="evidence" value="ECO:0000250"/>
    <property type="project" value="ARUK-UCL"/>
</dbReference>
<dbReference type="GO" id="GO:0043679">
    <property type="term" value="C:axon terminus"/>
    <property type="evidence" value="ECO:0000250"/>
    <property type="project" value="ARUK-UCL"/>
</dbReference>
<dbReference type="GO" id="GO:0016323">
    <property type="term" value="C:basolateral plasma membrane"/>
    <property type="evidence" value="ECO:0007669"/>
    <property type="project" value="UniProtKB-SubCell"/>
</dbReference>
<dbReference type="GO" id="GO:0030425">
    <property type="term" value="C:dendrite"/>
    <property type="evidence" value="ECO:0000250"/>
    <property type="project" value="ARUK-UCL"/>
</dbReference>
<dbReference type="GO" id="GO:0043197">
    <property type="term" value="C:dendritic spine"/>
    <property type="evidence" value="ECO:0007669"/>
    <property type="project" value="UniProtKB-SubCell"/>
</dbReference>
<dbReference type="GO" id="GO:0043025">
    <property type="term" value="C:neuronal cell body"/>
    <property type="evidence" value="ECO:0000250"/>
    <property type="project" value="ARUK-UCL"/>
</dbReference>
<dbReference type="GO" id="GO:0043204">
    <property type="term" value="C:perikaryon"/>
    <property type="evidence" value="ECO:0007669"/>
    <property type="project" value="UniProtKB-SubCell"/>
</dbReference>
<dbReference type="GO" id="GO:0005886">
    <property type="term" value="C:plasma membrane"/>
    <property type="evidence" value="ECO:0000250"/>
    <property type="project" value="UniProtKB"/>
</dbReference>
<dbReference type="GO" id="GO:0098794">
    <property type="term" value="C:postsynapse"/>
    <property type="evidence" value="ECO:0000318"/>
    <property type="project" value="GO_Central"/>
</dbReference>
<dbReference type="GO" id="GO:0014069">
    <property type="term" value="C:postsynaptic density"/>
    <property type="evidence" value="ECO:0000250"/>
    <property type="project" value="ARUK-UCL"/>
</dbReference>
<dbReference type="GO" id="GO:0098793">
    <property type="term" value="C:presynapse"/>
    <property type="evidence" value="ECO:0000314"/>
    <property type="project" value="ARUK-UCL"/>
</dbReference>
<dbReference type="GO" id="GO:0042383">
    <property type="term" value="C:sarcolemma"/>
    <property type="evidence" value="ECO:0000318"/>
    <property type="project" value="GO_Central"/>
</dbReference>
<dbReference type="GO" id="GO:0045202">
    <property type="term" value="C:synapse"/>
    <property type="evidence" value="ECO:0000250"/>
    <property type="project" value="ARUK-UCL"/>
</dbReference>
<dbReference type="GO" id="GO:0015085">
    <property type="term" value="F:calcium ion transmembrane transporter activity"/>
    <property type="evidence" value="ECO:0000250"/>
    <property type="project" value="ARUK-UCL"/>
</dbReference>
<dbReference type="GO" id="GO:1905060">
    <property type="term" value="F:calcium:monoatomic cation antiporter activity involved in regulation of postsynaptic cytosolic calcium ion concentration"/>
    <property type="evidence" value="ECO:0000250"/>
    <property type="project" value="ARUK-UCL"/>
</dbReference>
<dbReference type="GO" id="GO:0005432">
    <property type="term" value="F:calcium:sodium antiporter activity"/>
    <property type="evidence" value="ECO:0000250"/>
    <property type="project" value="UniProtKB"/>
</dbReference>
<dbReference type="GO" id="GO:0005516">
    <property type="term" value="F:calmodulin binding"/>
    <property type="evidence" value="ECO:0007669"/>
    <property type="project" value="UniProtKB-KW"/>
</dbReference>
<dbReference type="GO" id="GO:0046872">
    <property type="term" value="F:metal ion binding"/>
    <property type="evidence" value="ECO:0007669"/>
    <property type="project" value="UniProtKB-KW"/>
</dbReference>
<dbReference type="GO" id="GO:0015081">
    <property type="term" value="F:sodium ion transmembrane transporter activity"/>
    <property type="evidence" value="ECO:0000250"/>
    <property type="project" value="ARUK-UCL"/>
</dbReference>
<dbReference type="GO" id="GO:1990034">
    <property type="term" value="P:calcium ion export across plasma membrane"/>
    <property type="evidence" value="ECO:0000250"/>
    <property type="project" value="ARUK-UCL"/>
</dbReference>
<dbReference type="GO" id="GO:0098703">
    <property type="term" value="P:calcium ion import across plasma membrane"/>
    <property type="evidence" value="ECO:0000318"/>
    <property type="project" value="GO_Central"/>
</dbReference>
<dbReference type="GO" id="GO:0070588">
    <property type="term" value="P:calcium ion transmembrane transport"/>
    <property type="evidence" value="ECO:0000250"/>
    <property type="project" value="UniProtKB"/>
</dbReference>
<dbReference type="GO" id="GO:0007154">
    <property type="term" value="P:cell communication"/>
    <property type="evidence" value="ECO:0007669"/>
    <property type="project" value="InterPro"/>
</dbReference>
<dbReference type="GO" id="GO:0050890">
    <property type="term" value="P:cognition"/>
    <property type="evidence" value="ECO:0000250"/>
    <property type="project" value="ARUK-UCL"/>
</dbReference>
<dbReference type="GO" id="GO:0006874">
    <property type="term" value="P:intracellular calcium ion homeostasis"/>
    <property type="evidence" value="ECO:0000250"/>
    <property type="project" value="UniProtKB"/>
</dbReference>
<dbReference type="GO" id="GO:0007612">
    <property type="term" value="P:learning"/>
    <property type="evidence" value="ECO:0000250"/>
    <property type="project" value="UniProtKB"/>
</dbReference>
<dbReference type="GO" id="GO:0007611">
    <property type="term" value="P:learning or memory"/>
    <property type="evidence" value="ECO:0000250"/>
    <property type="project" value="ARUK-UCL"/>
</dbReference>
<dbReference type="GO" id="GO:0060291">
    <property type="term" value="P:long-term synaptic potentiation"/>
    <property type="evidence" value="ECO:0000250"/>
    <property type="project" value="UniProtKB"/>
</dbReference>
<dbReference type="GO" id="GO:0007613">
    <property type="term" value="P:memory"/>
    <property type="evidence" value="ECO:0000250"/>
    <property type="project" value="UniProtKB"/>
</dbReference>
<dbReference type="GO" id="GO:0098815">
    <property type="term" value="P:modulation of excitatory postsynaptic potential"/>
    <property type="evidence" value="ECO:0000250"/>
    <property type="project" value="ARUK-UCL"/>
</dbReference>
<dbReference type="GO" id="GO:0006811">
    <property type="term" value="P:monoatomic ion transport"/>
    <property type="evidence" value="ECO:0000304"/>
    <property type="project" value="Reactome"/>
</dbReference>
<dbReference type="GO" id="GO:0070050">
    <property type="term" value="P:neuron cellular homeostasis"/>
    <property type="evidence" value="ECO:0000250"/>
    <property type="project" value="ARUK-UCL"/>
</dbReference>
<dbReference type="GO" id="GO:1902533">
    <property type="term" value="P:positive regulation of intracellular signal transduction"/>
    <property type="evidence" value="ECO:0000250"/>
    <property type="project" value="ARUK-UCL"/>
</dbReference>
<dbReference type="GO" id="GO:0099608">
    <property type="term" value="P:regulation of action potential firing pattern"/>
    <property type="evidence" value="ECO:0000250"/>
    <property type="project" value="ARUK-UCL"/>
</dbReference>
<dbReference type="GO" id="GO:0106056">
    <property type="term" value="P:regulation of calcineurin-mediated signaling"/>
    <property type="evidence" value="ECO:0000250"/>
    <property type="project" value="ARUK-UCL"/>
</dbReference>
<dbReference type="GO" id="GO:1903779">
    <property type="term" value="P:regulation of cardiac conduction"/>
    <property type="evidence" value="ECO:0000304"/>
    <property type="project" value="Reactome"/>
</dbReference>
<dbReference type="GO" id="GO:0051480">
    <property type="term" value="P:regulation of cytosolic calcium ion concentration"/>
    <property type="evidence" value="ECO:0000250"/>
    <property type="project" value="ARUK-UCL"/>
</dbReference>
<dbReference type="GO" id="GO:0010468">
    <property type="term" value="P:regulation of gene expression"/>
    <property type="evidence" value="ECO:0000250"/>
    <property type="project" value="ARUK-UCL"/>
</dbReference>
<dbReference type="GO" id="GO:0048172">
    <property type="term" value="P:regulation of short-term neuronal synaptic plasticity"/>
    <property type="evidence" value="ECO:0000250"/>
    <property type="project" value="UniProtKB"/>
</dbReference>
<dbReference type="GO" id="GO:0002931">
    <property type="term" value="P:response to ischemia"/>
    <property type="evidence" value="ECO:0000250"/>
    <property type="project" value="ARUK-UCL"/>
</dbReference>
<dbReference type="GO" id="GO:0035725">
    <property type="term" value="P:sodium ion transmembrane transport"/>
    <property type="evidence" value="ECO:0000250"/>
    <property type="project" value="UniProtKB"/>
</dbReference>
<dbReference type="GO" id="GO:0050808">
    <property type="term" value="P:synapse organization"/>
    <property type="evidence" value="ECO:0000250"/>
    <property type="project" value="ARUK-UCL"/>
</dbReference>
<dbReference type="GO" id="GO:0150104">
    <property type="term" value="P:transport across blood-brain barrier"/>
    <property type="evidence" value="ECO:0000303"/>
    <property type="project" value="ARUK-UCL"/>
</dbReference>
<dbReference type="FunFam" id="1.20.1420.30:FF:000001">
    <property type="entry name" value="sodium/calcium exchanger 1 isoform X1"/>
    <property type="match status" value="1"/>
</dbReference>
<dbReference type="FunFam" id="1.20.1420.30:FF:000003">
    <property type="entry name" value="sodium/calcium exchanger 1 isoform X1"/>
    <property type="match status" value="1"/>
</dbReference>
<dbReference type="FunFam" id="2.60.40.2030:FF:000001">
    <property type="entry name" value="sodium/calcium exchanger 1 isoform X1"/>
    <property type="match status" value="1"/>
</dbReference>
<dbReference type="FunFam" id="2.60.40.2030:FF:000002">
    <property type="entry name" value="sodium/calcium exchanger 3 isoform X1"/>
    <property type="match status" value="1"/>
</dbReference>
<dbReference type="Gene3D" id="2.60.40.2030">
    <property type="match status" value="2"/>
</dbReference>
<dbReference type="Gene3D" id="1.20.1420.30">
    <property type="entry name" value="NCX, central ion-binding region"/>
    <property type="match status" value="2"/>
</dbReference>
<dbReference type="InterPro" id="IPR051171">
    <property type="entry name" value="CaCA"/>
</dbReference>
<dbReference type="InterPro" id="IPR038081">
    <property type="entry name" value="CalX-like_sf"/>
</dbReference>
<dbReference type="InterPro" id="IPR003644">
    <property type="entry name" value="Calx_beta"/>
</dbReference>
<dbReference type="InterPro" id="IPR004836">
    <property type="entry name" value="Na_Ca_Ex"/>
</dbReference>
<dbReference type="InterPro" id="IPR032452">
    <property type="entry name" value="Na_Ca_Ex_C-exten"/>
</dbReference>
<dbReference type="InterPro" id="IPR004837">
    <property type="entry name" value="NaCa_Exmemb"/>
</dbReference>
<dbReference type="InterPro" id="IPR044880">
    <property type="entry name" value="NCX_ion-bd_dom_sf"/>
</dbReference>
<dbReference type="NCBIfam" id="TIGR00845">
    <property type="entry name" value="caca"/>
    <property type="match status" value="1"/>
</dbReference>
<dbReference type="PANTHER" id="PTHR11878">
    <property type="entry name" value="SODIUM/CALCIUM EXCHANGER"/>
    <property type="match status" value="1"/>
</dbReference>
<dbReference type="PANTHER" id="PTHR11878:SF8">
    <property type="entry name" value="SODIUM_CALCIUM EXCHANGER 2"/>
    <property type="match status" value="1"/>
</dbReference>
<dbReference type="Pfam" id="PF03160">
    <property type="entry name" value="Calx-beta"/>
    <property type="match status" value="1"/>
</dbReference>
<dbReference type="Pfam" id="PF01699">
    <property type="entry name" value="Na_Ca_ex"/>
    <property type="match status" value="2"/>
</dbReference>
<dbReference type="Pfam" id="PF16494">
    <property type="entry name" value="Na_Ca_ex_C"/>
    <property type="match status" value="1"/>
</dbReference>
<dbReference type="PRINTS" id="PR01259">
    <property type="entry name" value="NACAEXCHNGR"/>
</dbReference>
<dbReference type="SMART" id="SM00237">
    <property type="entry name" value="Calx_beta"/>
    <property type="match status" value="2"/>
</dbReference>
<dbReference type="SUPFAM" id="SSF141072">
    <property type="entry name" value="CalX-like"/>
    <property type="match status" value="2"/>
</dbReference>
<proteinExistence type="evidence at protein level"/>
<protein>
    <recommendedName>
        <fullName>Sodium/calcium exchanger 2</fullName>
    </recommendedName>
    <alternativeName>
        <fullName>Na(+)/Ca(2+)-exchange protein 2</fullName>
    </alternativeName>
    <alternativeName>
        <fullName>Solute carrier family 8 member 2</fullName>
    </alternativeName>
</protein>